<dbReference type="EMBL" id="CP001068">
    <property type="protein sequence ID" value="ACD27316.1"/>
    <property type="molecule type" value="Genomic_DNA"/>
</dbReference>
<dbReference type="SMR" id="B2U7M9"/>
<dbReference type="STRING" id="402626.Rpic_2182"/>
<dbReference type="KEGG" id="rpi:Rpic_2182"/>
<dbReference type="PATRIC" id="fig|402626.5.peg.3329"/>
<dbReference type="eggNOG" id="COG0830">
    <property type="taxonomic scope" value="Bacteria"/>
</dbReference>
<dbReference type="HOGENOM" id="CLU_049215_2_1_4"/>
<dbReference type="GO" id="GO:0005737">
    <property type="term" value="C:cytoplasm"/>
    <property type="evidence" value="ECO:0007669"/>
    <property type="project" value="UniProtKB-SubCell"/>
</dbReference>
<dbReference type="GO" id="GO:0016151">
    <property type="term" value="F:nickel cation binding"/>
    <property type="evidence" value="ECO:0007669"/>
    <property type="project" value="UniProtKB-UniRule"/>
</dbReference>
<dbReference type="Gene3D" id="1.10.4190.10">
    <property type="entry name" value="Urease accessory protein UreF"/>
    <property type="match status" value="1"/>
</dbReference>
<dbReference type="HAMAP" id="MF_01385">
    <property type="entry name" value="UreF"/>
    <property type="match status" value="1"/>
</dbReference>
<dbReference type="InterPro" id="IPR002639">
    <property type="entry name" value="UreF"/>
</dbReference>
<dbReference type="InterPro" id="IPR038277">
    <property type="entry name" value="UreF_sf"/>
</dbReference>
<dbReference type="PANTHER" id="PTHR33620">
    <property type="entry name" value="UREASE ACCESSORY PROTEIN F"/>
    <property type="match status" value="1"/>
</dbReference>
<dbReference type="PANTHER" id="PTHR33620:SF1">
    <property type="entry name" value="UREASE ACCESSORY PROTEIN F"/>
    <property type="match status" value="1"/>
</dbReference>
<dbReference type="Pfam" id="PF01730">
    <property type="entry name" value="UreF"/>
    <property type="match status" value="1"/>
</dbReference>
<dbReference type="PIRSF" id="PIRSF009467">
    <property type="entry name" value="Ureas_acces_UreF"/>
    <property type="match status" value="1"/>
</dbReference>
<proteinExistence type="inferred from homology"/>
<gene>
    <name evidence="1" type="primary">ureF</name>
    <name type="ordered locus">Rpic_2182</name>
</gene>
<name>UREF_RALPJ</name>
<reference key="1">
    <citation type="submission" date="2008-05" db="EMBL/GenBank/DDBJ databases">
        <title>Complete sequence of chromosome 1 of Ralstonia pickettii 12J.</title>
        <authorList>
            <person name="Lucas S."/>
            <person name="Copeland A."/>
            <person name="Lapidus A."/>
            <person name="Glavina del Rio T."/>
            <person name="Dalin E."/>
            <person name="Tice H."/>
            <person name="Bruce D."/>
            <person name="Goodwin L."/>
            <person name="Pitluck S."/>
            <person name="Meincke L."/>
            <person name="Brettin T."/>
            <person name="Detter J.C."/>
            <person name="Han C."/>
            <person name="Kuske C.R."/>
            <person name="Schmutz J."/>
            <person name="Larimer F."/>
            <person name="Land M."/>
            <person name="Hauser L."/>
            <person name="Kyrpides N."/>
            <person name="Mikhailova N."/>
            <person name="Marsh T."/>
            <person name="Richardson P."/>
        </authorList>
    </citation>
    <scope>NUCLEOTIDE SEQUENCE [LARGE SCALE GENOMIC DNA]</scope>
    <source>
        <strain>12J</strain>
    </source>
</reference>
<comment type="function">
    <text evidence="1">Required for maturation of urease via the functional incorporation of the urease nickel metallocenter.</text>
</comment>
<comment type="subunit">
    <text evidence="1">UreD, UreF and UreG form a complex that acts as a GTP-hydrolysis-dependent molecular chaperone, activating the urease apoprotein by helping to assemble the nickel containing metallocenter of UreC. The UreE protein probably delivers the nickel.</text>
</comment>
<comment type="subcellular location">
    <subcellularLocation>
        <location evidence="1">Cytoplasm</location>
    </subcellularLocation>
</comment>
<comment type="similarity">
    <text evidence="1">Belongs to the UreF family.</text>
</comment>
<evidence type="ECO:0000255" key="1">
    <source>
        <dbReference type="HAMAP-Rule" id="MF_01385"/>
    </source>
</evidence>
<protein>
    <recommendedName>
        <fullName evidence="1">Urease accessory protein UreF</fullName>
    </recommendedName>
</protein>
<organism>
    <name type="scientific">Ralstonia pickettii (strain 12J)</name>
    <dbReference type="NCBI Taxonomy" id="402626"/>
    <lineage>
        <taxon>Bacteria</taxon>
        <taxon>Pseudomonadati</taxon>
        <taxon>Pseudomonadota</taxon>
        <taxon>Betaproteobacteria</taxon>
        <taxon>Burkholderiales</taxon>
        <taxon>Burkholderiaceae</taxon>
        <taxon>Ralstonia</taxon>
    </lineage>
</organism>
<feature type="chain" id="PRO_1000145136" description="Urease accessory protein UreF">
    <location>
        <begin position="1"/>
        <end position="229"/>
    </location>
</feature>
<keyword id="KW-0143">Chaperone</keyword>
<keyword id="KW-0963">Cytoplasm</keyword>
<keyword id="KW-0996">Nickel insertion</keyword>
<accession>B2U7M9</accession>
<sequence>MTNAAQLTALLHLASPALPVGAFSYSQGLEAAVDVRRVADEASAAAWIAEGLDVLAACEAPLWLLQFADWQAGRFDAVAERDAWFLATRETRELRLETSQMGWSLNRLIQQMAWGDDALRSALAACASVTFPTAFAAAAAALNVDPRDGVTAYCFAWVENQMAAAVKAVPLGQAAGQRILFGLHAAVARAVEEATRRAACHPPELSTFSPGLGVLSARHETQYSRLFRS</sequence>